<proteinExistence type="inferred from homology"/>
<gene>
    <name evidence="1" type="primary">frr</name>
    <name type="ordered locus">HD_1596</name>
</gene>
<name>RRF_HAEDU</name>
<comment type="function">
    <text evidence="1">Responsible for the release of ribosomes from messenger RNA at the termination of protein biosynthesis. May increase the efficiency of translation by recycling ribosomes from one round of translation to another.</text>
</comment>
<comment type="subcellular location">
    <subcellularLocation>
        <location evidence="1">Cytoplasm</location>
    </subcellularLocation>
</comment>
<comment type="similarity">
    <text evidence="1">Belongs to the RRF family.</text>
</comment>
<evidence type="ECO:0000255" key="1">
    <source>
        <dbReference type="HAMAP-Rule" id="MF_00040"/>
    </source>
</evidence>
<reference key="1">
    <citation type="submission" date="2003-06" db="EMBL/GenBank/DDBJ databases">
        <title>The complete genome sequence of Haemophilus ducreyi.</title>
        <authorList>
            <person name="Munson R.S. Jr."/>
            <person name="Ray W.C."/>
            <person name="Mahairas G."/>
            <person name="Sabo P."/>
            <person name="Mungur R."/>
            <person name="Johnson L."/>
            <person name="Nguyen D."/>
            <person name="Wang J."/>
            <person name="Forst C."/>
            <person name="Hood L."/>
        </authorList>
    </citation>
    <scope>NUCLEOTIDE SEQUENCE [LARGE SCALE GENOMIC DNA]</scope>
    <source>
        <strain>35000HP / ATCC 700724</strain>
    </source>
</reference>
<protein>
    <recommendedName>
        <fullName evidence="1">Ribosome-recycling factor</fullName>
        <shortName evidence="1">RRF</shortName>
    </recommendedName>
    <alternativeName>
        <fullName evidence="1">Ribosome-releasing factor</fullName>
    </alternativeName>
</protein>
<sequence length="185" mass="20767">MINEIKKDTQQRMEKSLEALKSHISKIRTGRAQPSLLDGIQVEYYGSATPLRQVANVVAEDARTLAVNVFDRSLISAVEKAILTSDLGLNPSSAGATIRVPLPALTEERRRDLIKIVKNEGEQGKIAIRNVRRDANDQIKALLKDKEISEDEERKAQDEIQKITDGYVKKVDEVLMAKEKELLDF</sequence>
<organism>
    <name type="scientific">Haemophilus ducreyi (strain 35000HP / ATCC 700724)</name>
    <dbReference type="NCBI Taxonomy" id="233412"/>
    <lineage>
        <taxon>Bacteria</taxon>
        <taxon>Pseudomonadati</taxon>
        <taxon>Pseudomonadota</taxon>
        <taxon>Gammaproteobacteria</taxon>
        <taxon>Pasteurellales</taxon>
        <taxon>Pasteurellaceae</taxon>
        <taxon>Haemophilus</taxon>
    </lineage>
</organism>
<feature type="chain" id="PRO_0000167467" description="Ribosome-recycling factor">
    <location>
        <begin position="1"/>
        <end position="185"/>
    </location>
</feature>
<keyword id="KW-0963">Cytoplasm</keyword>
<keyword id="KW-0648">Protein biosynthesis</keyword>
<keyword id="KW-1185">Reference proteome</keyword>
<dbReference type="EMBL" id="AE017143">
    <property type="protein sequence ID" value="AAP96376.1"/>
    <property type="molecule type" value="Genomic_DNA"/>
</dbReference>
<dbReference type="RefSeq" id="WP_010945408.1">
    <property type="nucleotide sequence ID" value="NC_002940.2"/>
</dbReference>
<dbReference type="SMR" id="Q7VL83"/>
<dbReference type="STRING" id="233412.HD_1596"/>
<dbReference type="KEGG" id="hdu:HD_1596"/>
<dbReference type="eggNOG" id="COG0233">
    <property type="taxonomic scope" value="Bacteria"/>
</dbReference>
<dbReference type="HOGENOM" id="CLU_073981_2_1_6"/>
<dbReference type="OrthoDB" id="9804006at2"/>
<dbReference type="Proteomes" id="UP000001022">
    <property type="component" value="Chromosome"/>
</dbReference>
<dbReference type="GO" id="GO:0005829">
    <property type="term" value="C:cytosol"/>
    <property type="evidence" value="ECO:0007669"/>
    <property type="project" value="GOC"/>
</dbReference>
<dbReference type="GO" id="GO:0043023">
    <property type="term" value="F:ribosomal large subunit binding"/>
    <property type="evidence" value="ECO:0007669"/>
    <property type="project" value="TreeGrafter"/>
</dbReference>
<dbReference type="GO" id="GO:0002184">
    <property type="term" value="P:cytoplasmic translational termination"/>
    <property type="evidence" value="ECO:0007669"/>
    <property type="project" value="TreeGrafter"/>
</dbReference>
<dbReference type="CDD" id="cd00520">
    <property type="entry name" value="RRF"/>
    <property type="match status" value="1"/>
</dbReference>
<dbReference type="FunFam" id="1.10.132.20:FF:000001">
    <property type="entry name" value="Ribosome-recycling factor"/>
    <property type="match status" value="1"/>
</dbReference>
<dbReference type="FunFam" id="3.30.1360.40:FF:000001">
    <property type="entry name" value="Ribosome-recycling factor"/>
    <property type="match status" value="1"/>
</dbReference>
<dbReference type="Gene3D" id="3.30.1360.40">
    <property type="match status" value="1"/>
</dbReference>
<dbReference type="Gene3D" id="1.10.132.20">
    <property type="entry name" value="Ribosome-recycling factor"/>
    <property type="match status" value="1"/>
</dbReference>
<dbReference type="HAMAP" id="MF_00040">
    <property type="entry name" value="RRF"/>
    <property type="match status" value="1"/>
</dbReference>
<dbReference type="InterPro" id="IPR002661">
    <property type="entry name" value="Ribosome_recyc_fac"/>
</dbReference>
<dbReference type="InterPro" id="IPR023584">
    <property type="entry name" value="Ribosome_recyc_fac_dom"/>
</dbReference>
<dbReference type="InterPro" id="IPR036191">
    <property type="entry name" value="RRF_sf"/>
</dbReference>
<dbReference type="NCBIfam" id="TIGR00496">
    <property type="entry name" value="frr"/>
    <property type="match status" value="1"/>
</dbReference>
<dbReference type="PANTHER" id="PTHR20982:SF3">
    <property type="entry name" value="MITOCHONDRIAL RIBOSOME RECYCLING FACTOR PSEUDO 1"/>
    <property type="match status" value="1"/>
</dbReference>
<dbReference type="PANTHER" id="PTHR20982">
    <property type="entry name" value="RIBOSOME RECYCLING FACTOR"/>
    <property type="match status" value="1"/>
</dbReference>
<dbReference type="Pfam" id="PF01765">
    <property type="entry name" value="RRF"/>
    <property type="match status" value="1"/>
</dbReference>
<dbReference type="SUPFAM" id="SSF55194">
    <property type="entry name" value="Ribosome recycling factor, RRF"/>
    <property type="match status" value="1"/>
</dbReference>
<accession>Q7VL83</accession>